<reference key="1">
    <citation type="journal article" date="2000" name="AIDS">
        <title>HIV-1 subtype H near-full length genome reference strains and analysis of subtype-H-containing inter-subtype recombinants.</title>
        <authorList>
            <person name="Janssens W."/>
            <person name="Laukkanen T."/>
            <person name="Salminen M.O."/>
            <person name="Carr J.K."/>
            <person name="Van der Auwera G."/>
            <person name="Heyndrickx L."/>
            <person name="van der Groen G."/>
            <person name="McCutchan F.E."/>
        </authorList>
    </citation>
    <scope>NUCLEOTIDE SEQUENCE [GENOMIC DNA]</scope>
</reference>
<reference key="2">
    <citation type="journal article" date="1999" name="Arch. Biochem. Biophys.">
        <title>The ins and outs of HIV Rev.</title>
        <authorList>
            <person name="Hope T.J."/>
        </authorList>
    </citation>
    <scope>REVIEW</scope>
</reference>
<comment type="function">
    <text evidence="1">Escorts unspliced or incompletely spliced viral pre-mRNAs (late transcripts) out of the nucleus of infected cells. These pre-mRNAs carry a recognition sequence called Rev responsive element (RRE) located in the env gene, that is not present in fully spliced viral mRNAs (early transcripts). This function is essential since most viral proteins are translated from unspliced or partially spliced pre-mRNAs which cannot exit the nucleus by the pathway used by fully processed cellular mRNAs. Rev itself is translated from a fully spliced mRNA that readily exits the nucleus. Rev's nuclear localization signal (NLS) binds directly to KPNB1/Importin beta-1 without previous binding to KPNA1/Importin alpha-1. KPNB1 binds to the GDP bound form of RAN (Ran-GDP) and targets Rev to the nucleus. In the nucleus, the conversion from Ran-GDP to Ran-GTP dissociates Rev from KPNB1 and allows Rev's binding to the RRE in viral pre-mRNAs. Rev multimerization on the RRE via cooperative assembly exposes its nuclear export signal (NES) to the surface. Rev can then form a complex with XPO1/CRM1 and Ran-GTP, leading to nuclear export of the complex. Conversion from Ran-GTP to Ran-GDP mediates dissociation of the Rev/RRE/XPO1/RAN complex, so that Rev can return to the nucleus for a subsequent round of export. Beside KPNB1, also seems to interact with TNPO1/Transportin-1, RANBP5/IPO5 and IPO7/RANBP7 for nuclear import. The nucleoporin-like HRB/RIP is an essential cofactor that probably indirectly interacts with Rev to release HIV RNAs from the perinuclear region to the cytoplasm.</text>
</comment>
<comment type="subunit">
    <text evidence="1">Homomultimer; when bound to the RRE. Multimeric assembly is essential for activity and may involve XPO1. Binds to human KPNB1, XPO1, TNPO1, RANBP5 and IPO7. Interacts with the viral Integrase. Interacts with human KHDRBS1. Interacts with human NAP1; this interaction decreases Rev multimerization and stimulates its activity. Interacts with human DEAD-box helicases DDX3 and DDX24; these interactions may serve for viral RNA export to the cytoplasm and packaging, respectively. Interacts with human PSIP1; this interaction may inhibit HIV-1 DNA integration by promoting dissociation of the Integrase-LEDGF/p75 complex.</text>
</comment>
<comment type="subcellular location">
    <subcellularLocation>
        <location evidence="1">Host nucleus</location>
        <location evidence="1">Host nucleolus</location>
    </subcellularLocation>
    <subcellularLocation>
        <location evidence="1">Host cytoplasm</location>
    </subcellularLocation>
    <text evidence="1">The presence of both nuclear import and nuclear export signals leads to continuous shuttling between the nucleus and cytoplasm.</text>
</comment>
<comment type="domain">
    <text evidence="1">The RNA-binding motif binds to the RRE, a 240 bp stem-and-loop structure present in incompletely spliced viral pre-mRNAs. This region also contains the NLS which mediates nuclear localization via KPNB1 binding and, when the N-terminal sequence is present, nucleolar targeting. These overlapping functions prevent Rev bound to RRE from undesirable return to the nucleus. When Rev binds the RRE, the NLS becomes masked while the NES remains accessible. The leucine-rich NES mediates binding to human XPO1.</text>
</comment>
<comment type="PTM">
    <text evidence="1">Asymmetrically arginine dimethylated at one site by host PRMT6. Methylation impairs the RNA-binding activity and export of viral RNA from the nucleus to the cytoplasm.</text>
</comment>
<comment type="PTM">
    <text evidence="1">Phosphorylated by protein kinase CK2. Presence of, and maybe binding to the N-terminus of the regulatory beta subunit of CK2 is necessary for CK2-mediated Rev's phosphorylation.</text>
</comment>
<comment type="miscellaneous">
    <text evidence="1">HIV-1 lineages are divided in three main groups, M (for Major), O (for Outlier), and N (for New, or Non-M, Non-O). The vast majority of strains found worldwide belong to the group M. Group O seems to be endemic to and largely confined to Cameroon and neighboring countries in West Central Africa, where these viruses represent a small minority of HIV-1 strains. The group N is represented by a limited number of isolates from Cameroonian persons. The group M is further subdivided in 9 clades or subtypes (A to D, F to H, J and K).</text>
</comment>
<comment type="similarity">
    <text evidence="1">Belongs to the HIV-1 REV protein family.</text>
</comment>
<accession>Q9Q716</accession>
<protein>
    <recommendedName>
        <fullName evidence="1">Protein Rev</fullName>
    </recommendedName>
    <alternativeName>
        <fullName evidence="1">ART/TRS</fullName>
    </alternativeName>
    <alternativeName>
        <fullName evidence="1">Anti-repression transactivator</fullName>
    </alternativeName>
    <alternativeName>
        <fullName evidence="1">Regulator of expression of viral proteins</fullName>
    </alternativeName>
</protein>
<sequence length="116" mass="12592">MAGRSGDNDEGLLRACRIIRLLYQSNPYPEPAGTRQAQRNRRRRWRARQRQIHSIGERVLATCLGGPAEPVPLQLPPLERLTLDCSEDCGTSGEKGVGSPQTSGESPAVLGTGAKE</sequence>
<proteinExistence type="inferred from homology"/>
<organism>
    <name type="scientific">Human immunodeficiency virus type 1 group M subtype H (isolate VI991)</name>
    <name type="common">HIV-1</name>
    <dbReference type="NCBI Taxonomy" id="388888"/>
    <lineage>
        <taxon>Viruses</taxon>
        <taxon>Riboviria</taxon>
        <taxon>Pararnavirae</taxon>
        <taxon>Artverviricota</taxon>
        <taxon>Revtraviricetes</taxon>
        <taxon>Ortervirales</taxon>
        <taxon>Retroviridae</taxon>
        <taxon>Orthoretrovirinae</taxon>
        <taxon>Lentivirus</taxon>
        <taxon>Human immunodeficiency virus type 1</taxon>
    </lineage>
</organism>
<keyword id="KW-0014">AIDS</keyword>
<keyword id="KW-1035">Host cytoplasm</keyword>
<keyword id="KW-1048">Host nucleus</keyword>
<keyword id="KW-0945">Host-virus interaction</keyword>
<keyword id="KW-0488">Methylation</keyword>
<keyword id="KW-0509">mRNA transport</keyword>
<keyword id="KW-0597">Phosphoprotein</keyword>
<keyword id="KW-0694">RNA-binding</keyword>
<keyword id="KW-0813">Transport</keyword>
<dbReference type="EMBL" id="AF190127">
    <property type="protein sequence ID" value="AAF18400.1"/>
    <property type="molecule type" value="Genomic_DNA"/>
</dbReference>
<dbReference type="SMR" id="Q9Q716"/>
<dbReference type="Proteomes" id="UP000150531">
    <property type="component" value="Segment"/>
</dbReference>
<dbReference type="GO" id="GO:0030430">
    <property type="term" value="C:host cell cytoplasm"/>
    <property type="evidence" value="ECO:0007669"/>
    <property type="project" value="UniProtKB-SubCell"/>
</dbReference>
<dbReference type="GO" id="GO:0044196">
    <property type="term" value="C:host cell nucleolus"/>
    <property type="evidence" value="ECO:0007669"/>
    <property type="project" value="UniProtKB-SubCell"/>
</dbReference>
<dbReference type="GO" id="GO:0003700">
    <property type="term" value="F:DNA-binding transcription factor activity"/>
    <property type="evidence" value="ECO:0007669"/>
    <property type="project" value="UniProtKB-UniRule"/>
</dbReference>
<dbReference type="GO" id="GO:0003723">
    <property type="term" value="F:RNA binding"/>
    <property type="evidence" value="ECO:0007669"/>
    <property type="project" value="UniProtKB-UniRule"/>
</dbReference>
<dbReference type="GO" id="GO:0051028">
    <property type="term" value="P:mRNA transport"/>
    <property type="evidence" value="ECO:0007669"/>
    <property type="project" value="UniProtKB-UniRule"/>
</dbReference>
<dbReference type="GO" id="GO:0016032">
    <property type="term" value="P:viral process"/>
    <property type="evidence" value="ECO:0007669"/>
    <property type="project" value="UniProtKB-UniRule"/>
</dbReference>
<dbReference type="Gene3D" id="6.10.140.630">
    <property type="match status" value="1"/>
</dbReference>
<dbReference type="HAMAP" id="MF_04077">
    <property type="entry name" value="REV_HIV1"/>
    <property type="match status" value="1"/>
</dbReference>
<dbReference type="InterPro" id="IPR000625">
    <property type="entry name" value="REV_protein"/>
</dbReference>
<dbReference type="Pfam" id="PF00424">
    <property type="entry name" value="REV"/>
    <property type="match status" value="1"/>
</dbReference>
<name>REV_HV1V9</name>
<organismHost>
    <name type="scientific">Homo sapiens</name>
    <name type="common">Human</name>
    <dbReference type="NCBI Taxonomy" id="9606"/>
</organismHost>
<gene>
    <name evidence="1" type="primary">rev</name>
</gene>
<feature type="chain" id="PRO_0000245007" description="Protein Rev">
    <location>
        <begin position="1"/>
        <end position="116"/>
    </location>
</feature>
<feature type="region of interest" description="Homomultimerization" evidence="1">
    <location>
        <begin position="18"/>
        <end position="26"/>
    </location>
</feature>
<feature type="region of interest" description="Disordered" evidence="2">
    <location>
        <begin position="27"/>
        <end position="49"/>
    </location>
</feature>
<feature type="region of interest" description="Disordered" evidence="2">
    <location>
        <begin position="86"/>
        <end position="116"/>
    </location>
</feature>
<feature type="short sequence motif" description="Nuclear localization signal and RNA-binding (RRE)" evidence="1">
    <location>
        <begin position="34"/>
        <end position="50"/>
    </location>
</feature>
<feature type="short sequence motif" description="Nuclear export signal and binding to XPO1" evidence="1">
    <location>
        <begin position="73"/>
        <end position="84"/>
    </location>
</feature>
<feature type="compositionally biased region" description="Basic residues" evidence="2">
    <location>
        <begin position="38"/>
        <end position="49"/>
    </location>
</feature>
<feature type="modified residue" description="Phosphoserine; by host CK2" evidence="1">
    <location>
        <position position="5"/>
    </location>
</feature>
<feature type="modified residue" description="Phosphoserine; by host" evidence="1">
    <location>
        <position position="92"/>
    </location>
</feature>
<feature type="modified residue" description="Phosphoserine; by host" evidence="1">
    <location>
        <position position="99"/>
    </location>
</feature>
<evidence type="ECO:0000255" key="1">
    <source>
        <dbReference type="HAMAP-Rule" id="MF_04077"/>
    </source>
</evidence>
<evidence type="ECO:0000256" key="2">
    <source>
        <dbReference type="SAM" id="MobiDB-lite"/>
    </source>
</evidence>